<feature type="chain" id="PRO_0000193944" description="Iron-sulfur cluster assembly protein CyaY">
    <location>
        <begin position="1"/>
        <end position="107"/>
    </location>
</feature>
<dbReference type="EMBL" id="AE004969">
    <property type="protein sequence ID" value="AAW90701.1"/>
    <property type="molecule type" value="Genomic_DNA"/>
</dbReference>
<dbReference type="RefSeq" id="WP_002226758.1">
    <property type="nucleotide sequence ID" value="NC_002946.2"/>
</dbReference>
<dbReference type="RefSeq" id="YP_209113.1">
    <property type="nucleotide sequence ID" value="NC_002946.2"/>
</dbReference>
<dbReference type="SMR" id="Q5F536"/>
<dbReference type="STRING" id="242231.NGO_2100"/>
<dbReference type="GeneID" id="66754428"/>
<dbReference type="KEGG" id="ngo:NGO_2100"/>
<dbReference type="PATRIC" id="fig|242231.10.peg.2541"/>
<dbReference type="HOGENOM" id="CLU_080880_3_0_4"/>
<dbReference type="Proteomes" id="UP000000535">
    <property type="component" value="Chromosome"/>
</dbReference>
<dbReference type="GO" id="GO:0005737">
    <property type="term" value="C:cytoplasm"/>
    <property type="evidence" value="ECO:0007669"/>
    <property type="project" value="UniProtKB-ARBA"/>
</dbReference>
<dbReference type="GO" id="GO:0008199">
    <property type="term" value="F:ferric iron binding"/>
    <property type="evidence" value="ECO:0007669"/>
    <property type="project" value="InterPro"/>
</dbReference>
<dbReference type="GO" id="GO:0016226">
    <property type="term" value="P:iron-sulfur cluster assembly"/>
    <property type="evidence" value="ECO:0007669"/>
    <property type="project" value="UniProtKB-UniRule"/>
</dbReference>
<dbReference type="CDD" id="cd00503">
    <property type="entry name" value="Frataxin"/>
    <property type="match status" value="1"/>
</dbReference>
<dbReference type="Gene3D" id="3.30.920.10">
    <property type="entry name" value="Frataxin/CyaY"/>
    <property type="match status" value="1"/>
</dbReference>
<dbReference type="HAMAP" id="MF_00142">
    <property type="entry name" value="CyaY"/>
    <property type="match status" value="1"/>
</dbReference>
<dbReference type="InterPro" id="IPR047584">
    <property type="entry name" value="CyaY"/>
</dbReference>
<dbReference type="InterPro" id="IPR002908">
    <property type="entry name" value="Frataxin/CyaY"/>
</dbReference>
<dbReference type="InterPro" id="IPR036524">
    <property type="entry name" value="Frataxin/CyaY_sf"/>
</dbReference>
<dbReference type="InterPro" id="IPR020895">
    <property type="entry name" value="Frataxin_CS"/>
</dbReference>
<dbReference type="NCBIfam" id="TIGR03421">
    <property type="entry name" value="FeS_CyaY"/>
    <property type="match status" value="1"/>
</dbReference>
<dbReference type="PANTHER" id="PTHR16821">
    <property type="entry name" value="FRATAXIN"/>
    <property type="match status" value="1"/>
</dbReference>
<dbReference type="PANTHER" id="PTHR16821:SF2">
    <property type="entry name" value="FRATAXIN, MITOCHONDRIAL"/>
    <property type="match status" value="1"/>
</dbReference>
<dbReference type="Pfam" id="PF01491">
    <property type="entry name" value="Frataxin_Cyay"/>
    <property type="match status" value="1"/>
</dbReference>
<dbReference type="SMART" id="SM01219">
    <property type="entry name" value="Frataxin_Cyay"/>
    <property type="match status" value="1"/>
</dbReference>
<dbReference type="SUPFAM" id="SSF55387">
    <property type="entry name" value="Frataxin/Nqo15-like"/>
    <property type="match status" value="1"/>
</dbReference>
<dbReference type="PROSITE" id="PS01344">
    <property type="entry name" value="FRATAXIN_1"/>
    <property type="match status" value="1"/>
</dbReference>
<dbReference type="PROSITE" id="PS50810">
    <property type="entry name" value="FRATAXIN_2"/>
    <property type="match status" value="1"/>
</dbReference>
<accession>Q5F536</accession>
<evidence type="ECO:0000255" key="1">
    <source>
        <dbReference type="HAMAP-Rule" id="MF_00142"/>
    </source>
</evidence>
<name>CYAY_NEIG1</name>
<keyword id="KW-0408">Iron</keyword>
<keyword id="KW-0479">Metal-binding</keyword>
<keyword id="KW-1185">Reference proteome</keyword>
<organism>
    <name type="scientific">Neisseria gonorrhoeae (strain ATCC 700825 / FA 1090)</name>
    <dbReference type="NCBI Taxonomy" id="242231"/>
    <lineage>
        <taxon>Bacteria</taxon>
        <taxon>Pseudomonadati</taxon>
        <taxon>Pseudomonadota</taxon>
        <taxon>Betaproteobacteria</taxon>
        <taxon>Neisseriales</taxon>
        <taxon>Neisseriaceae</taxon>
        <taxon>Neisseria</taxon>
    </lineage>
</organism>
<proteinExistence type="inferred from homology"/>
<reference key="1">
    <citation type="submission" date="2003-03" db="EMBL/GenBank/DDBJ databases">
        <title>The complete genome sequence of Neisseria gonorrhoeae.</title>
        <authorList>
            <person name="Lewis L.A."/>
            <person name="Gillaspy A.F."/>
            <person name="McLaughlin R.E."/>
            <person name="Gipson M."/>
            <person name="Ducey T.F."/>
            <person name="Ownbey T."/>
            <person name="Hartman K."/>
            <person name="Nydick C."/>
            <person name="Carson M.B."/>
            <person name="Vaughn J."/>
            <person name="Thomson C."/>
            <person name="Song L."/>
            <person name="Lin S."/>
            <person name="Yuan X."/>
            <person name="Najar F."/>
            <person name="Zhan M."/>
            <person name="Ren Q."/>
            <person name="Zhu H."/>
            <person name="Qi S."/>
            <person name="Kenton S.M."/>
            <person name="Lai H."/>
            <person name="White J.D."/>
            <person name="Clifton S."/>
            <person name="Roe B.A."/>
            <person name="Dyer D.W."/>
        </authorList>
    </citation>
    <scope>NUCLEOTIDE SEQUENCE [LARGE SCALE GENOMIC DNA]</scope>
    <source>
        <strain>ATCC 700825 / FA 1090</strain>
    </source>
</reference>
<gene>
    <name evidence="1" type="primary">cyaY</name>
    <name type="ordered locus">NGO_2100</name>
</gene>
<sequence>MMTESEFIRASEALFEHIEDQIDENGWDFDCRFAGNVLTIEAGDGTQIIVNRHTPNQELWIAAKSGGYHFAEQNGKWLATRDSRDFYDVLNEALSAASGEAVEIAEL</sequence>
<protein>
    <recommendedName>
        <fullName evidence="1">Iron-sulfur cluster assembly protein CyaY</fullName>
    </recommendedName>
</protein>
<comment type="function">
    <text evidence="1">Involved in iron-sulfur (Fe-S) cluster assembly. May act as a regulator of Fe-S biogenesis.</text>
</comment>
<comment type="similarity">
    <text evidence="1">Belongs to the frataxin family.</text>
</comment>